<gene>
    <name evidence="1" type="primary">hyuA</name>
    <name type="ordered locus">E2348C_3125</name>
</gene>
<proteinExistence type="inferred from homology"/>
<name>PHYDA_ECO27</name>
<reference key="1">
    <citation type="journal article" date="2009" name="J. Bacteriol.">
        <title>Complete genome sequence and comparative genome analysis of enteropathogenic Escherichia coli O127:H6 strain E2348/69.</title>
        <authorList>
            <person name="Iguchi A."/>
            <person name="Thomson N.R."/>
            <person name="Ogura Y."/>
            <person name="Saunders D."/>
            <person name="Ooka T."/>
            <person name="Henderson I.R."/>
            <person name="Harris D."/>
            <person name="Asadulghani M."/>
            <person name="Kurokawa K."/>
            <person name="Dean P."/>
            <person name="Kenny B."/>
            <person name="Quail M.A."/>
            <person name="Thurston S."/>
            <person name="Dougan G."/>
            <person name="Hayashi T."/>
            <person name="Parkhill J."/>
            <person name="Frankel G."/>
        </authorList>
    </citation>
    <scope>NUCLEOTIDE SEQUENCE [LARGE SCALE GENOMIC DNA]</scope>
    <source>
        <strain>E2348/69 / EPEC</strain>
    </source>
</reference>
<keyword id="KW-0378">Hydrolase</keyword>
<keyword id="KW-0479">Metal-binding</keyword>
<keyword id="KW-1185">Reference proteome</keyword>
<sequence>MRVLIKNGIVVNADGQAKQDLLIESGIVRQLGTDISPQLPCEEIDASGCYVFPGGVDVHTHFNIDVGIARSCDDFFTGTRAAACGGTTTIIDHMGFGPNGCRLRHQLEVYRGYAAHKAVIDYSFHGVIQHINHAILDEIPMMVEEGLSSFKLYLTYQYKLNDDEVLQALRRLHESGALTTVHPENDAAIASKRAEFIAAGLTAPRYHALSRPLECEAEAIARMINLAQIAGNAPLYIVHLSNGLGLDYLRLARANHQPVWVETCPQYLLLDERSYDTEDGMKFILSPPLRNVREQDKLWCGISDGAIDVVATDHCTFSMAQRLQISKGDFSRCPNGLPGVENRMQLLFSSGVMTGRISPERFVELTSAMPARLFGLWPQKGLLAPGSDGDVVIIDPRQSQQIQHRHLHDNADYSPWEGFTCQGAIVRTLSRGEMIFCDGTFTGKAGRGRFLRRKPFVPPVL</sequence>
<feature type="chain" id="PRO_1000186907" description="D-phenylhydantoinase">
    <location>
        <begin position="1"/>
        <end position="461"/>
    </location>
</feature>
<feature type="binding site" evidence="1">
    <location>
        <position position="59"/>
    </location>
    <ligand>
        <name>a divalent metal cation</name>
        <dbReference type="ChEBI" id="CHEBI:60240"/>
        <label>1</label>
    </ligand>
</feature>
<feature type="binding site" evidence="1">
    <location>
        <position position="61"/>
    </location>
    <ligand>
        <name>a divalent metal cation</name>
        <dbReference type="ChEBI" id="CHEBI:60240"/>
        <label>1</label>
    </ligand>
</feature>
<feature type="binding site" description="via carbamate group" evidence="1">
    <location>
        <position position="151"/>
    </location>
    <ligand>
        <name>a divalent metal cation</name>
        <dbReference type="ChEBI" id="CHEBI:60240"/>
        <label>1</label>
    </ligand>
</feature>
<feature type="binding site" description="via carbamate group" evidence="1">
    <location>
        <position position="151"/>
    </location>
    <ligand>
        <name>a divalent metal cation</name>
        <dbReference type="ChEBI" id="CHEBI:60240"/>
        <label>2</label>
    </ligand>
</feature>
<feature type="binding site" evidence="1">
    <location>
        <position position="156"/>
    </location>
    <ligand>
        <name>substrate</name>
    </ligand>
</feature>
<feature type="binding site" evidence="1">
    <location>
        <position position="182"/>
    </location>
    <ligand>
        <name>a divalent metal cation</name>
        <dbReference type="ChEBI" id="CHEBI:60240"/>
        <label>2</label>
    </ligand>
</feature>
<feature type="binding site" evidence="1">
    <location>
        <position position="239"/>
    </location>
    <ligand>
        <name>a divalent metal cation</name>
        <dbReference type="ChEBI" id="CHEBI:60240"/>
        <label>2</label>
    </ligand>
</feature>
<feature type="binding site" evidence="1">
    <location>
        <position position="286"/>
    </location>
    <ligand>
        <name>substrate</name>
    </ligand>
</feature>
<feature type="binding site" evidence="1">
    <location>
        <position position="313"/>
    </location>
    <ligand>
        <name>a divalent metal cation</name>
        <dbReference type="ChEBI" id="CHEBI:60240"/>
        <label>1</label>
    </ligand>
</feature>
<feature type="binding site" evidence="1">
    <location>
        <position position="335"/>
    </location>
    <ligand>
        <name>substrate</name>
    </ligand>
</feature>
<feature type="modified residue" description="N6-carboxylysine" evidence="1">
    <location>
        <position position="151"/>
    </location>
</feature>
<evidence type="ECO:0000255" key="1">
    <source>
        <dbReference type="HAMAP-Rule" id="MF_01644"/>
    </source>
</evidence>
<protein>
    <recommendedName>
        <fullName evidence="1">D-phenylhydantoinase</fullName>
        <ecNumber evidence="1">3.5.2.-</ecNumber>
    </recommendedName>
    <alternativeName>
        <fullName evidence="1">Hydantoin-utilizing enzyme HyuA</fullName>
    </alternativeName>
</protein>
<comment type="function">
    <text evidence="1">Catalyzes the stereospecific hydrolysis of the cyclic amide bond of D-hydantoin derivatives with an aromatic side chains at the 5'-position. Has no activity on dihydropyrimidines. The physiological function is unknown.</text>
</comment>
<comment type="catalytic activity">
    <reaction evidence="1">
        <text>D-5-phenylhydantoin + H2O = N-carbamoyl-D-phenylglycine + H(+)</text>
        <dbReference type="Rhea" id="RHEA:51664"/>
        <dbReference type="ChEBI" id="CHEBI:15377"/>
        <dbReference type="ChEBI" id="CHEBI:15378"/>
        <dbReference type="ChEBI" id="CHEBI:140750"/>
        <dbReference type="ChEBI" id="CHEBI:140758"/>
    </reaction>
</comment>
<comment type="cofactor">
    <cofactor evidence="1">
        <name>a divalent metal cation</name>
        <dbReference type="ChEBI" id="CHEBI:60240"/>
    </cofactor>
    <text evidence="1">Binds 2 divalent metal cations per subunit.</text>
</comment>
<comment type="subunit">
    <text evidence="1">Homotetramer.</text>
</comment>
<comment type="PTM">
    <text evidence="1">Carboxylation allows a single lysine to coordinate two divalent metal cations.</text>
</comment>
<comment type="similarity">
    <text evidence="1">Belongs to the metallo-dependent hydrolases superfamily. Hydantoinase/dihydropyrimidinase family.</text>
</comment>
<accession>B7UHS3</accession>
<dbReference type="EC" id="3.5.2.-" evidence="1"/>
<dbReference type="EMBL" id="FM180568">
    <property type="protein sequence ID" value="CAS10673.1"/>
    <property type="molecule type" value="Genomic_DNA"/>
</dbReference>
<dbReference type="RefSeq" id="WP_001264433.1">
    <property type="nucleotide sequence ID" value="NC_011601.1"/>
</dbReference>
<dbReference type="SMR" id="B7UHS3"/>
<dbReference type="KEGG" id="ecg:E2348C_3125"/>
<dbReference type="HOGENOM" id="CLU_015572_2_0_6"/>
<dbReference type="Proteomes" id="UP000008205">
    <property type="component" value="Chromosome"/>
</dbReference>
<dbReference type="GO" id="GO:0005829">
    <property type="term" value="C:cytosol"/>
    <property type="evidence" value="ECO:0007669"/>
    <property type="project" value="TreeGrafter"/>
</dbReference>
<dbReference type="GO" id="GO:0016812">
    <property type="term" value="F:hydrolase activity, acting on carbon-nitrogen (but not peptide) bonds, in cyclic amides"/>
    <property type="evidence" value="ECO:0007669"/>
    <property type="project" value="UniProtKB-UniRule"/>
</dbReference>
<dbReference type="GO" id="GO:0046872">
    <property type="term" value="F:metal ion binding"/>
    <property type="evidence" value="ECO:0007669"/>
    <property type="project" value="UniProtKB-KW"/>
</dbReference>
<dbReference type="GO" id="GO:0006208">
    <property type="term" value="P:pyrimidine nucleobase catabolic process"/>
    <property type="evidence" value="ECO:0007669"/>
    <property type="project" value="InterPro"/>
</dbReference>
<dbReference type="CDD" id="cd01314">
    <property type="entry name" value="D-HYD"/>
    <property type="match status" value="1"/>
</dbReference>
<dbReference type="FunFam" id="3.20.20.140:FF:000026">
    <property type="entry name" value="D-phenylhydantoinase"/>
    <property type="match status" value="1"/>
</dbReference>
<dbReference type="Gene3D" id="3.20.20.140">
    <property type="entry name" value="Metal-dependent hydrolases"/>
    <property type="match status" value="1"/>
</dbReference>
<dbReference type="Gene3D" id="2.30.40.10">
    <property type="entry name" value="Urease, subunit C, domain 1"/>
    <property type="match status" value="1"/>
</dbReference>
<dbReference type="HAMAP" id="MF_01644">
    <property type="entry name" value="D_hydantoinase"/>
    <property type="match status" value="1"/>
</dbReference>
<dbReference type="InterPro" id="IPR006680">
    <property type="entry name" value="Amidohydro-rel"/>
</dbReference>
<dbReference type="InterPro" id="IPR023766">
    <property type="entry name" value="D_phenylhydantoinase"/>
</dbReference>
<dbReference type="InterPro" id="IPR011778">
    <property type="entry name" value="Hydantoinase/dihydroPyrase"/>
</dbReference>
<dbReference type="InterPro" id="IPR011059">
    <property type="entry name" value="Metal-dep_hydrolase_composite"/>
</dbReference>
<dbReference type="InterPro" id="IPR032466">
    <property type="entry name" value="Metal_Hydrolase"/>
</dbReference>
<dbReference type="InterPro" id="IPR050378">
    <property type="entry name" value="Metallo-dep_Hydrolases_sf"/>
</dbReference>
<dbReference type="NCBIfam" id="TIGR02033">
    <property type="entry name" value="D-hydantoinase"/>
    <property type="match status" value="1"/>
</dbReference>
<dbReference type="PANTHER" id="PTHR11647:SF1">
    <property type="entry name" value="COLLAPSIN RESPONSE MEDIATOR PROTEIN"/>
    <property type="match status" value="1"/>
</dbReference>
<dbReference type="PANTHER" id="PTHR11647">
    <property type="entry name" value="HYDRANTOINASE/DIHYDROPYRIMIDINASE FAMILY MEMBER"/>
    <property type="match status" value="1"/>
</dbReference>
<dbReference type="Pfam" id="PF01979">
    <property type="entry name" value="Amidohydro_1"/>
    <property type="match status" value="1"/>
</dbReference>
<dbReference type="SUPFAM" id="SSF51338">
    <property type="entry name" value="Composite domain of metallo-dependent hydrolases"/>
    <property type="match status" value="2"/>
</dbReference>
<dbReference type="SUPFAM" id="SSF51556">
    <property type="entry name" value="Metallo-dependent hydrolases"/>
    <property type="match status" value="1"/>
</dbReference>
<organism>
    <name type="scientific">Escherichia coli O127:H6 (strain E2348/69 / EPEC)</name>
    <dbReference type="NCBI Taxonomy" id="574521"/>
    <lineage>
        <taxon>Bacteria</taxon>
        <taxon>Pseudomonadati</taxon>
        <taxon>Pseudomonadota</taxon>
        <taxon>Gammaproteobacteria</taxon>
        <taxon>Enterobacterales</taxon>
        <taxon>Enterobacteriaceae</taxon>
        <taxon>Escherichia</taxon>
    </lineage>
</organism>